<keyword id="KW-0413">Isomerase</keyword>
<keyword id="KW-1185">Reference proteome</keyword>
<keyword id="KW-0819">tRNA processing</keyword>
<feature type="chain" id="PRO_1000084575" description="tRNA pseudouridine synthase B">
    <location>
        <begin position="1"/>
        <end position="307"/>
    </location>
</feature>
<feature type="active site" description="Nucleophile" evidence="1">
    <location>
        <position position="38"/>
    </location>
</feature>
<evidence type="ECO:0000255" key="1">
    <source>
        <dbReference type="HAMAP-Rule" id="MF_01080"/>
    </source>
</evidence>
<reference key="1">
    <citation type="submission" date="2007-11" db="EMBL/GenBank/DDBJ databases">
        <title>Complete genome sequence of Clostridium phytofermentans ISDg.</title>
        <authorList>
            <person name="Leschine S.B."/>
            <person name="Warnick T.A."/>
            <person name="Blanchard J.L."/>
            <person name="Schnell D.J."/>
            <person name="Petit E.L."/>
            <person name="LaTouf W.G."/>
            <person name="Copeland A."/>
            <person name="Lucas S."/>
            <person name="Lapidus A."/>
            <person name="Barry K."/>
            <person name="Glavina del Rio T."/>
            <person name="Dalin E."/>
            <person name="Tice H."/>
            <person name="Pitluck S."/>
            <person name="Kiss H."/>
            <person name="Brettin T."/>
            <person name="Bruce D."/>
            <person name="Detter J.C."/>
            <person name="Han C."/>
            <person name="Kuske C."/>
            <person name="Schmutz J."/>
            <person name="Larimer F."/>
            <person name="Land M."/>
            <person name="Hauser L."/>
            <person name="Kyrpides N."/>
            <person name="Kim E.A."/>
            <person name="Richardson P."/>
        </authorList>
    </citation>
    <scope>NUCLEOTIDE SEQUENCE [LARGE SCALE GENOMIC DNA]</scope>
    <source>
        <strain>ATCC 700394 / DSM 18823 / ISDg</strain>
    </source>
</reference>
<dbReference type="EC" id="5.4.99.25" evidence="1"/>
<dbReference type="EMBL" id="CP000885">
    <property type="protein sequence ID" value="ABX43131.1"/>
    <property type="molecule type" value="Genomic_DNA"/>
</dbReference>
<dbReference type="RefSeq" id="WP_012200782.1">
    <property type="nucleotide sequence ID" value="NC_010001.1"/>
</dbReference>
<dbReference type="SMR" id="A9KNW1"/>
<dbReference type="STRING" id="357809.Cphy_2771"/>
<dbReference type="KEGG" id="cpy:Cphy_2771"/>
<dbReference type="eggNOG" id="COG0130">
    <property type="taxonomic scope" value="Bacteria"/>
</dbReference>
<dbReference type="HOGENOM" id="CLU_032087_0_1_9"/>
<dbReference type="OrthoDB" id="9802309at2"/>
<dbReference type="Proteomes" id="UP000000370">
    <property type="component" value="Chromosome"/>
</dbReference>
<dbReference type="GO" id="GO:0003723">
    <property type="term" value="F:RNA binding"/>
    <property type="evidence" value="ECO:0007669"/>
    <property type="project" value="InterPro"/>
</dbReference>
<dbReference type="GO" id="GO:0160148">
    <property type="term" value="F:tRNA pseudouridine(55) synthase activity"/>
    <property type="evidence" value="ECO:0007669"/>
    <property type="project" value="UniProtKB-EC"/>
</dbReference>
<dbReference type="GO" id="GO:1990481">
    <property type="term" value="P:mRNA pseudouridine synthesis"/>
    <property type="evidence" value="ECO:0007669"/>
    <property type="project" value="TreeGrafter"/>
</dbReference>
<dbReference type="GO" id="GO:0031119">
    <property type="term" value="P:tRNA pseudouridine synthesis"/>
    <property type="evidence" value="ECO:0007669"/>
    <property type="project" value="UniProtKB-UniRule"/>
</dbReference>
<dbReference type="CDD" id="cd02573">
    <property type="entry name" value="PseudoU_synth_EcTruB"/>
    <property type="match status" value="1"/>
</dbReference>
<dbReference type="FunFam" id="3.30.2350.10:FF:000011">
    <property type="entry name" value="tRNA pseudouridine synthase B"/>
    <property type="match status" value="1"/>
</dbReference>
<dbReference type="Gene3D" id="3.30.2350.10">
    <property type="entry name" value="Pseudouridine synthase"/>
    <property type="match status" value="1"/>
</dbReference>
<dbReference type="HAMAP" id="MF_01080">
    <property type="entry name" value="TruB_bact"/>
    <property type="match status" value="1"/>
</dbReference>
<dbReference type="InterPro" id="IPR020103">
    <property type="entry name" value="PsdUridine_synth_cat_dom_sf"/>
</dbReference>
<dbReference type="InterPro" id="IPR002501">
    <property type="entry name" value="PsdUridine_synth_N"/>
</dbReference>
<dbReference type="InterPro" id="IPR014780">
    <property type="entry name" value="tRNA_psdUridine_synth_TruB"/>
</dbReference>
<dbReference type="InterPro" id="IPR032819">
    <property type="entry name" value="TruB_C"/>
</dbReference>
<dbReference type="NCBIfam" id="TIGR00431">
    <property type="entry name" value="TruB"/>
    <property type="match status" value="1"/>
</dbReference>
<dbReference type="PANTHER" id="PTHR13767:SF2">
    <property type="entry name" value="PSEUDOURIDYLATE SYNTHASE TRUB1"/>
    <property type="match status" value="1"/>
</dbReference>
<dbReference type="PANTHER" id="PTHR13767">
    <property type="entry name" value="TRNA-PSEUDOURIDINE SYNTHASE"/>
    <property type="match status" value="1"/>
</dbReference>
<dbReference type="Pfam" id="PF16198">
    <property type="entry name" value="TruB_C_2"/>
    <property type="match status" value="1"/>
</dbReference>
<dbReference type="Pfam" id="PF01509">
    <property type="entry name" value="TruB_N"/>
    <property type="match status" value="1"/>
</dbReference>
<dbReference type="SUPFAM" id="SSF55120">
    <property type="entry name" value="Pseudouridine synthase"/>
    <property type="match status" value="1"/>
</dbReference>
<gene>
    <name evidence="1" type="primary">truB</name>
    <name type="ordered locus">Cphy_2771</name>
</gene>
<name>TRUB_LACP7</name>
<protein>
    <recommendedName>
        <fullName evidence="1">tRNA pseudouridine synthase B</fullName>
        <ecNumber evidence="1">5.4.99.25</ecNumber>
    </recommendedName>
    <alternativeName>
        <fullName evidence="1">tRNA pseudouridine(55) synthase</fullName>
        <shortName evidence="1">Psi55 synthase</shortName>
    </alternativeName>
    <alternativeName>
        <fullName evidence="1">tRNA pseudouridylate synthase</fullName>
    </alternativeName>
    <alternativeName>
        <fullName evidence="1">tRNA-uridine isomerase</fullName>
    </alternativeName>
</protein>
<proteinExistence type="inferred from homology"/>
<organism>
    <name type="scientific">Lachnoclostridium phytofermentans (strain ATCC 700394 / DSM 18823 / ISDg)</name>
    <name type="common">Clostridium phytofermentans</name>
    <dbReference type="NCBI Taxonomy" id="357809"/>
    <lineage>
        <taxon>Bacteria</taxon>
        <taxon>Bacillati</taxon>
        <taxon>Bacillota</taxon>
        <taxon>Clostridia</taxon>
        <taxon>Lachnospirales</taxon>
        <taxon>Lachnospiraceae</taxon>
    </lineage>
</organism>
<sequence>MNGIINVYKEKGFTSFDVCAKLRGILKQKKIGHTGTLDPDAEGVLPVCVGNATKLCDLLTDKDKVYEAVLTLGIITDTEDMTGEVLERRLVTATYDRVLEVVEQFTRTYDQIPPMYSAIKVNGQKLYELARQGKVIERKPRTVTIHAIDILGVTPLEEQPEIVHEVRMRVSCSKGTYIRSLCRDIGEALQCGGCMKSLIRTQVSIFTLENTLRLAEIEECVKNQTLEQVLMPVDKLFLSMPKVVVKKESCKFLYNGNQLVEDNFTWEKVSDQINIDKIRVYDSEDVFTGIYEYDEKKNCYQPVKMFL</sequence>
<comment type="function">
    <text evidence="1">Responsible for synthesis of pseudouridine from uracil-55 in the psi GC loop of transfer RNAs.</text>
</comment>
<comment type="catalytic activity">
    <reaction evidence="1">
        <text>uridine(55) in tRNA = pseudouridine(55) in tRNA</text>
        <dbReference type="Rhea" id="RHEA:42532"/>
        <dbReference type="Rhea" id="RHEA-COMP:10101"/>
        <dbReference type="Rhea" id="RHEA-COMP:10102"/>
        <dbReference type="ChEBI" id="CHEBI:65314"/>
        <dbReference type="ChEBI" id="CHEBI:65315"/>
        <dbReference type="EC" id="5.4.99.25"/>
    </reaction>
</comment>
<comment type="similarity">
    <text evidence="1">Belongs to the pseudouridine synthase TruB family. Type 1 subfamily.</text>
</comment>
<accession>A9KNW1</accession>